<evidence type="ECO:0000250" key="1"/>
<evidence type="ECO:0000250" key="2">
    <source>
        <dbReference type="UniProtKB" id="P14416"/>
    </source>
</evidence>
<evidence type="ECO:0000250" key="3">
    <source>
        <dbReference type="UniProtKB" id="P61168"/>
    </source>
</evidence>
<evidence type="ECO:0000250" key="4">
    <source>
        <dbReference type="UniProtKB" id="P61169"/>
    </source>
</evidence>
<evidence type="ECO:0000255" key="5"/>
<evidence type="ECO:0000255" key="6">
    <source>
        <dbReference type="PROSITE-ProRule" id="PRU00521"/>
    </source>
</evidence>
<evidence type="ECO:0000256" key="7">
    <source>
        <dbReference type="SAM" id="MobiDB-lite"/>
    </source>
</evidence>
<evidence type="ECO:0000305" key="8"/>
<dbReference type="EMBL" id="AB080609">
    <property type="protein sequence ID" value="BAC10668.1"/>
    <property type="molecule type" value="Genomic_DNA"/>
</dbReference>
<dbReference type="EMBL" id="AY665279">
    <property type="protein sequence ID" value="AAV74317.1"/>
    <property type="molecule type" value="mRNA"/>
</dbReference>
<dbReference type="RefSeq" id="NP_001029100.1">
    <property type="nucleotide sequence ID" value="NM_001033928.1"/>
</dbReference>
<dbReference type="RefSeq" id="XP_016775319.1">
    <property type="nucleotide sequence ID" value="XM_016919830.3"/>
</dbReference>
<dbReference type="RefSeq" id="XP_016775320.1">
    <property type="nucleotide sequence ID" value="XM_016919831.4"/>
</dbReference>
<dbReference type="SMR" id="P60026"/>
<dbReference type="FunCoup" id="P60026">
    <property type="interactions" value="895"/>
</dbReference>
<dbReference type="STRING" id="9598.ENSPTRP00000069610"/>
<dbReference type="GlyCosmos" id="P60026">
    <property type="glycosylation" value="3 sites, No reported glycans"/>
</dbReference>
<dbReference type="PaxDb" id="9598-ENSPTRP00000045741"/>
<dbReference type="Ensembl" id="ENSPTRT00000104721.1">
    <property type="protein sequence ID" value="ENSPTRP00000069210.1"/>
    <property type="gene ID" value="ENSPTRG00000004295.6"/>
</dbReference>
<dbReference type="GeneID" id="451553"/>
<dbReference type="KEGG" id="ptr:451553"/>
<dbReference type="CTD" id="1813"/>
<dbReference type="VGNC" id="VGNC:3283">
    <property type="gene designation" value="DRD2"/>
</dbReference>
<dbReference type="eggNOG" id="KOG3656">
    <property type="taxonomic scope" value="Eukaryota"/>
</dbReference>
<dbReference type="GeneTree" id="ENSGT00940000155539"/>
<dbReference type="InParanoid" id="P60026"/>
<dbReference type="OrthoDB" id="10801at9604"/>
<dbReference type="Proteomes" id="UP000002277">
    <property type="component" value="Chromosome 11"/>
</dbReference>
<dbReference type="Bgee" id="ENSPTRG00000004295">
    <property type="expression patterns" value="Expressed in pituitary gland and 7 other cell types or tissues"/>
</dbReference>
<dbReference type="GO" id="GO:0098978">
    <property type="term" value="C:glutamatergic synapse"/>
    <property type="evidence" value="ECO:0000318"/>
    <property type="project" value="GO_Central"/>
</dbReference>
<dbReference type="GO" id="GO:0000139">
    <property type="term" value="C:Golgi membrane"/>
    <property type="evidence" value="ECO:0007669"/>
    <property type="project" value="UniProtKB-SubCell"/>
</dbReference>
<dbReference type="GO" id="GO:0005886">
    <property type="term" value="C:plasma membrane"/>
    <property type="evidence" value="ECO:0000318"/>
    <property type="project" value="GO_Central"/>
</dbReference>
<dbReference type="GO" id="GO:0042734">
    <property type="term" value="C:presynaptic membrane"/>
    <property type="evidence" value="ECO:0000318"/>
    <property type="project" value="GO_Central"/>
</dbReference>
<dbReference type="GO" id="GO:0001591">
    <property type="term" value="F:dopamine neurotransmitter receptor activity, coupled via Gi/Go"/>
    <property type="evidence" value="ECO:0000318"/>
    <property type="project" value="GO_Central"/>
</dbReference>
<dbReference type="GO" id="GO:0004930">
    <property type="term" value="F:G protein-coupled receptor activity"/>
    <property type="evidence" value="ECO:0000318"/>
    <property type="project" value="GO_Central"/>
</dbReference>
<dbReference type="GO" id="GO:0007195">
    <property type="term" value="P:adenylate cyclase-inhibiting dopamine receptor signaling pathway"/>
    <property type="evidence" value="ECO:0000318"/>
    <property type="project" value="GO_Central"/>
</dbReference>
<dbReference type="GO" id="GO:1990384">
    <property type="term" value="P:hyaloid vascular plexus regression"/>
    <property type="evidence" value="ECO:0000250"/>
    <property type="project" value="UniProtKB"/>
</dbReference>
<dbReference type="GO" id="GO:0051481">
    <property type="term" value="P:negative regulation of cytosolic calcium ion concentration"/>
    <property type="evidence" value="ECO:0000318"/>
    <property type="project" value="GO_Central"/>
</dbReference>
<dbReference type="GO" id="GO:0051967">
    <property type="term" value="P:negative regulation of synaptic transmission, glutamatergic"/>
    <property type="evidence" value="ECO:0000318"/>
    <property type="project" value="GO_Central"/>
</dbReference>
<dbReference type="GO" id="GO:0060158">
    <property type="term" value="P:phospholipase C-activating dopamine receptor signaling pathway"/>
    <property type="evidence" value="ECO:0000318"/>
    <property type="project" value="GO_Central"/>
</dbReference>
<dbReference type="GO" id="GO:0014059">
    <property type="term" value="P:regulation of dopamine secretion"/>
    <property type="evidence" value="ECO:0000318"/>
    <property type="project" value="GO_Central"/>
</dbReference>
<dbReference type="GO" id="GO:0043266">
    <property type="term" value="P:regulation of potassium ion transport"/>
    <property type="evidence" value="ECO:0000318"/>
    <property type="project" value="GO_Central"/>
</dbReference>
<dbReference type="CDD" id="cd15309">
    <property type="entry name" value="7tmA_D2_dopamine_R"/>
    <property type="match status" value="1"/>
</dbReference>
<dbReference type="FunFam" id="1.20.1070.10:FF:000099">
    <property type="entry name" value="D(2) dopamine receptor"/>
    <property type="match status" value="1"/>
</dbReference>
<dbReference type="FunFam" id="1.20.1070.10:FF:000086">
    <property type="entry name" value="Dopamine D2 receptor 2"/>
    <property type="match status" value="1"/>
</dbReference>
<dbReference type="Gene3D" id="1.20.1070.10">
    <property type="entry name" value="Rhodopsin 7-helix transmembrane proteins"/>
    <property type="match status" value="2"/>
</dbReference>
<dbReference type="InterPro" id="IPR001922">
    <property type="entry name" value="Dopamine_D2_rcpt"/>
</dbReference>
<dbReference type="InterPro" id="IPR000929">
    <property type="entry name" value="Dopamine_rcpt"/>
</dbReference>
<dbReference type="InterPro" id="IPR000276">
    <property type="entry name" value="GPCR_Rhodpsn"/>
</dbReference>
<dbReference type="InterPro" id="IPR017452">
    <property type="entry name" value="GPCR_Rhodpsn_7TM"/>
</dbReference>
<dbReference type="PANTHER" id="PTHR24248">
    <property type="entry name" value="ADRENERGIC RECEPTOR-RELATED G-PROTEIN COUPLED RECEPTOR"/>
    <property type="match status" value="1"/>
</dbReference>
<dbReference type="PANTHER" id="PTHR24248:SF87">
    <property type="entry name" value="D(2) DOPAMINE RECEPTOR"/>
    <property type="match status" value="1"/>
</dbReference>
<dbReference type="Pfam" id="PF00001">
    <property type="entry name" value="7tm_1"/>
    <property type="match status" value="1"/>
</dbReference>
<dbReference type="PRINTS" id="PR00567">
    <property type="entry name" value="DOPAMINED2R"/>
</dbReference>
<dbReference type="PRINTS" id="PR00242">
    <property type="entry name" value="DOPAMINER"/>
</dbReference>
<dbReference type="PRINTS" id="PR00237">
    <property type="entry name" value="GPCRRHODOPSN"/>
</dbReference>
<dbReference type="SMART" id="SM01381">
    <property type="entry name" value="7TM_GPCR_Srsx"/>
    <property type="match status" value="1"/>
</dbReference>
<dbReference type="SUPFAM" id="SSF81321">
    <property type="entry name" value="Family A G protein-coupled receptor-like"/>
    <property type="match status" value="1"/>
</dbReference>
<dbReference type="PROSITE" id="PS00237">
    <property type="entry name" value="G_PROTEIN_RECEP_F1_1"/>
    <property type="match status" value="1"/>
</dbReference>
<dbReference type="PROSITE" id="PS50262">
    <property type="entry name" value="G_PROTEIN_RECEP_F1_2"/>
    <property type="match status" value="1"/>
</dbReference>
<gene>
    <name type="primary">DRD2</name>
</gene>
<sequence>MDPLNLSWYDDDLERQNWSRPFNGSDGKADRPHYNYYATLLTLLIAVIVFGNVLVCMAVSREKALQTTTNYLIVSLAVADLLVATLVMPWVVYLEVVGEWKFSRIHCDIFVTLDVMMCTASILNLCAISIDRYTAVAMPMLYNTRYSSKRRVTVMISIVWVLSFTISCPLLFGLNNADQNECIIANPAFVVYSSIVSFYVPFIVTLLVYIKIYIVLRRRRKRVNTKRSSRAFRAHLRAPLKGNCTHPEDMKLCTVIMKSNGSFPVNRRRVEAARRAQELEMEMLSSTSPPERTRYSPIPPSHHQLTLPDPSHHGLHSTPDSPAKPEKNGHAKDHPKIAKIFEIQTMPNGKTRTSLKTMSRRKLSQQKEKKATQMLAIVLGVFIICWLPFFITHILNIHCDCNIPPVLYSAFTWLGYVNSAVNPIIYTTFNIEFRKAFLKILHC</sequence>
<accession>P60026</accession>
<accession>Q5IS49</accession>
<feature type="chain" id="PRO_0000069389" description="D(2) dopamine receptor">
    <location>
        <begin position="1"/>
        <end position="443"/>
    </location>
</feature>
<feature type="topological domain" description="Extracellular" evidence="1">
    <location>
        <begin position="1"/>
        <end position="37"/>
    </location>
</feature>
<feature type="transmembrane region" description="Helical; Name=1" evidence="1">
    <location>
        <begin position="38"/>
        <end position="60"/>
    </location>
</feature>
<feature type="topological domain" description="Cytoplasmic" evidence="1">
    <location>
        <begin position="61"/>
        <end position="70"/>
    </location>
</feature>
<feature type="transmembrane region" description="Helical; Name=2" evidence="1">
    <location>
        <begin position="71"/>
        <end position="93"/>
    </location>
</feature>
<feature type="topological domain" description="Extracellular" evidence="1">
    <location>
        <begin position="94"/>
        <end position="108"/>
    </location>
</feature>
<feature type="transmembrane region" description="Helical; Name=3" evidence="1">
    <location>
        <begin position="109"/>
        <end position="130"/>
    </location>
</feature>
<feature type="topological domain" description="Cytoplasmic" evidence="1">
    <location>
        <begin position="131"/>
        <end position="151"/>
    </location>
</feature>
<feature type="transmembrane region" description="Helical; Name=4" evidence="1">
    <location>
        <begin position="152"/>
        <end position="172"/>
    </location>
</feature>
<feature type="topological domain" description="Extracellular" evidence="1">
    <location>
        <begin position="173"/>
        <end position="188"/>
    </location>
</feature>
<feature type="transmembrane region" description="Helical; Name=5" evidence="1">
    <location>
        <begin position="189"/>
        <end position="213"/>
    </location>
</feature>
<feature type="topological domain" description="Cytoplasmic" evidence="1">
    <location>
        <begin position="214"/>
        <end position="373"/>
    </location>
</feature>
<feature type="transmembrane region" description="Helical; Name=6" evidence="1">
    <location>
        <begin position="374"/>
        <end position="395"/>
    </location>
</feature>
<feature type="topological domain" description="Extracellular" evidence="1">
    <location>
        <begin position="396"/>
        <end position="409"/>
    </location>
</feature>
<feature type="transmembrane region" description="Helical; Name=7" evidence="1">
    <location>
        <begin position="410"/>
        <end position="431"/>
    </location>
</feature>
<feature type="topological domain" description="Cytoplasmic" evidence="1">
    <location>
        <begin position="432"/>
        <end position="443"/>
    </location>
</feature>
<feature type="region of interest" description="Interaction with PPP1R9B" evidence="1">
    <location>
        <begin position="211"/>
        <end position="373"/>
    </location>
</feature>
<feature type="region of interest" description="Disordered" evidence="7">
    <location>
        <begin position="281"/>
        <end position="332"/>
    </location>
</feature>
<feature type="compositionally biased region" description="Basic and acidic residues" evidence="7">
    <location>
        <begin position="323"/>
        <end position="332"/>
    </location>
</feature>
<feature type="lipid moiety-binding region" description="S-palmitoyl cysteine" evidence="2">
    <location>
        <position position="443"/>
    </location>
</feature>
<feature type="glycosylation site" description="N-linked (GlcNAc...) asparagine" evidence="5">
    <location>
        <position position="5"/>
    </location>
</feature>
<feature type="glycosylation site" description="N-linked (GlcNAc...) asparagine" evidence="5">
    <location>
        <position position="17"/>
    </location>
</feature>
<feature type="glycosylation site" description="N-linked (GlcNAc...) asparagine" evidence="5">
    <location>
        <position position="23"/>
    </location>
</feature>
<feature type="disulfide bond" evidence="6">
    <location>
        <begin position="107"/>
        <end position="182"/>
    </location>
</feature>
<feature type="disulfide bond" evidence="6">
    <location>
        <begin position="399"/>
        <end position="401"/>
    </location>
</feature>
<feature type="sequence conflict" description="In Ref. 2; AAV74317." evidence="8" ref="2">
    <original>K</original>
    <variation>R</variation>
    <location>
        <position position="258"/>
    </location>
</feature>
<comment type="function">
    <text evidence="2 3">Dopamine receptor whose activity is mediated by G proteins which inhibit adenylyl cyclase (By similarity). Positively regulates postnatal regression of retinal hyaloid vessels via suppression of VEGFR2/KDR activity, downstream of OPN5 (By similarity).</text>
</comment>
<comment type="subunit">
    <text evidence="2 3 4">Forms homo- and heterooligomers with DRD4. The interaction with DRD4 may modulate agonist-induced downstream signaling. Interacts with CADPS and CADPS2 (By similarity). Interacts with GPRASP1, PPP1R9B and CLIC6. Interacts with ARRB2 (By similarity). Interacts with HTR2A (By similarity). Interacts with DRD1. Interacts with KCNA2 (By similarity).</text>
</comment>
<comment type="subcellular location">
    <subcellularLocation>
        <location evidence="2">Cell membrane</location>
        <topology evidence="5">Multi-pass membrane protein</topology>
    </subcellularLocation>
    <subcellularLocation>
        <location evidence="2">Golgi apparatus membrane</location>
        <topology evidence="5">Multi-pass membrane protein</topology>
    </subcellularLocation>
</comment>
<comment type="PTM">
    <text evidence="2">Palmitoylated. Palmitoylation which is required for proper localization to the plasma membrane and stability of the receptor could be carried on by ZDHHC4, ZDHHC3 and ZDHHC8.</text>
</comment>
<comment type="similarity">
    <text evidence="6">Belongs to the G-protein coupled receptor 1 family.</text>
</comment>
<name>DRD2_PANTR</name>
<reference key="1">
    <citation type="submission" date="2002-02" db="EMBL/GenBank/DDBJ databases">
        <title>Dopamine receptor D2 (DRD2) gene in Pan troglodytes.</title>
        <authorList>
            <person name="Takahashi A."/>
            <person name="Hayasaka I."/>
            <person name="Noaki Y."/>
            <person name="Saitou N."/>
        </authorList>
    </citation>
    <scope>NUCLEOTIDE SEQUENCE [GENOMIC DNA]</scope>
    <source>
        <strain>Isolate #130</strain>
    </source>
</reference>
<reference key="2">
    <citation type="journal article" date="2004" name="Cell">
        <title>Accelerated evolution of nervous system genes in the origin of Homo sapiens.</title>
        <authorList>
            <person name="Dorus S."/>
            <person name="Vallender E.J."/>
            <person name="Evans P.D."/>
            <person name="Anderson J.R."/>
            <person name="Gilbert S.L."/>
            <person name="Mahowald M."/>
            <person name="Wyckoff G.J."/>
            <person name="Malcom C.M."/>
            <person name="Lahn B.T."/>
        </authorList>
    </citation>
    <scope>NUCLEOTIDE SEQUENCE [MRNA]</scope>
</reference>
<protein>
    <recommendedName>
        <fullName>D(2) dopamine receptor</fullName>
    </recommendedName>
    <alternativeName>
        <fullName>Dopamine D2 receptor</fullName>
    </alternativeName>
</protein>
<organism>
    <name type="scientific">Pan troglodytes</name>
    <name type="common">Chimpanzee</name>
    <dbReference type="NCBI Taxonomy" id="9598"/>
    <lineage>
        <taxon>Eukaryota</taxon>
        <taxon>Metazoa</taxon>
        <taxon>Chordata</taxon>
        <taxon>Craniata</taxon>
        <taxon>Vertebrata</taxon>
        <taxon>Euteleostomi</taxon>
        <taxon>Mammalia</taxon>
        <taxon>Eutheria</taxon>
        <taxon>Euarchontoglires</taxon>
        <taxon>Primates</taxon>
        <taxon>Haplorrhini</taxon>
        <taxon>Catarrhini</taxon>
        <taxon>Hominidae</taxon>
        <taxon>Pan</taxon>
    </lineage>
</organism>
<keyword id="KW-1003">Cell membrane</keyword>
<keyword id="KW-1015">Disulfide bond</keyword>
<keyword id="KW-0297">G-protein coupled receptor</keyword>
<keyword id="KW-0325">Glycoprotein</keyword>
<keyword id="KW-0333">Golgi apparatus</keyword>
<keyword id="KW-0449">Lipoprotein</keyword>
<keyword id="KW-0472">Membrane</keyword>
<keyword id="KW-0564">Palmitate</keyword>
<keyword id="KW-0675">Receptor</keyword>
<keyword id="KW-1185">Reference proteome</keyword>
<keyword id="KW-0807">Transducer</keyword>
<keyword id="KW-0812">Transmembrane</keyword>
<keyword id="KW-1133">Transmembrane helix</keyword>
<proteinExistence type="evidence at transcript level"/>